<protein>
    <recommendedName>
        <fullName evidence="2">Purine nucleoside phosphorylase DeoD-type</fullName>
        <shortName evidence="2">PNP</shortName>
        <ecNumber evidence="2">2.4.2.1</ecNumber>
    </recommendedName>
</protein>
<name>DEOD_LISMF</name>
<keyword id="KW-0328">Glycosyltransferase</keyword>
<keyword id="KW-0808">Transferase</keyword>
<organism>
    <name type="scientific">Listeria monocytogenes serotype 4b (strain F2365)</name>
    <dbReference type="NCBI Taxonomy" id="265669"/>
    <lineage>
        <taxon>Bacteria</taxon>
        <taxon>Bacillati</taxon>
        <taxon>Bacillota</taxon>
        <taxon>Bacilli</taxon>
        <taxon>Bacillales</taxon>
        <taxon>Listeriaceae</taxon>
        <taxon>Listeria</taxon>
    </lineage>
</organism>
<accession>Q71YG0</accession>
<proteinExistence type="inferred from homology"/>
<feature type="chain" id="PRO_0000063144" description="Purine nucleoside phosphorylase DeoD-type">
    <location>
        <begin position="1"/>
        <end position="233"/>
    </location>
</feature>
<feature type="active site" description="Proton donor" evidence="2">
    <location>
        <position position="203"/>
    </location>
</feature>
<feature type="binding site" evidence="1">
    <location>
        <position position="4"/>
    </location>
    <ligand>
        <name>a purine D-ribonucleoside</name>
        <dbReference type="ChEBI" id="CHEBI:142355"/>
        <note>ligand shared between dimeric partners</note>
    </ligand>
</feature>
<feature type="binding site" description="in other chain" evidence="1">
    <location>
        <position position="20"/>
    </location>
    <ligand>
        <name>phosphate</name>
        <dbReference type="ChEBI" id="CHEBI:43474"/>
        <note>ligand shared between dimeric partners</note>
    </ligand>
</feature>
<feature type="binding site" description="in other chain" evidence="1">
    <location>
        <position position="24"/>
    </location>
    <ligand>
        <name>phosphate</name>
        <dbReference type="ChEBI" id="CHEBI:43474"/>
        <note>ligand shared between dimeric partners</note>
    </ligand>
</feature>
<feature type="binding site" evidence="1">
    <location>
        <position position="43"/>
    </location>
    <ligand>
        <name>phosphate</name>
        <dbReference type="ChEBI" id="CHEBI:43474"/>
        <note>ligand shared between dimeric partners</note>
    </ligand>
</feature>
<feature type="binding site" description="in other chain" evidence="1">
    <location>
        <begin position="87"/>
        <end position="90"/>
    </location>
    <ligand>
        <name>phosphate</name>
        <dbReference type="ChEBI" id="CHEBI:43474"/>
        <note>ligand shared between dimeric partners</note>
    </ligand>
</feature>
<feature type="binding site" description="in other chain" evidence="1">
    <location>
        <begin position="178"/>
        <end position="180"/>
    </location>
    <ligand>
        <name>a purine D-ribonucleoside</name>
        <dbReference type="ChEBI" id="CHEBI:142355"/>
        <note>ligand shared between dimeric partners</note>
    </ligand>
</feature>
<feature type="binding site" description="in other chain" evidence="1">
    <location>
        <begin position="202"/>
        <end position="203"/>
    </location>
    <ligand>
        <name>a purine D-ribonucleoside</name>
        <dbReference type="ChEBI" id="CHEBI:142355"/>
        <note>ligand shared between dimeric partners</note>
    </ligand>
</feature>
<feature type="site" description="Important for catalytic activity" evidence="2">
    <location>
        <position position="216"/>
    </location>
</feature>
<dbReference type="EC" id="2.4.2.1" evidence="2"/>
<dbReference type="EMBL" id="AE017262">
    <property type="protein sequence ID" value="AAT04654.1"/>
    <property type="molecule type" value="Genomic_DNA"/>
</dbReference>
<dbReference type="RefSeq" id="WP_003723411.1">
    <property type="nucleotide sequence ID" value="NC_002973.6"/>
</dbReference>
<dbReference type="SMR" id="Q71YG0"/>
<dbReference type="GeneID" id="87010957"/>
<dbReference type="KEGG" id="lmf:LMOf2365_1884"/>
<dbReference type="HOGENOM" id="CLU_068457_2_0_9"/>
<dbReference type="GO" id="GO:0005829">
    <property type="term" value="C:cytosol"/>
    <property type="evidence" value="ECO:0007669"/>
    <property type="project" value="TreeGrafter"/>
</dbReference>
<dbReference type="GO" id="GO:0004731">
    <property type="term" value="F:purine-nucleoside phosphorylase activity"/>
    <property type="evidence" value="ECO:0007669"/>
    <property type="project" value="UniProtKB-UniRule"/>
</dbReference>
<dbReference type="GO" id="GO:0006152">
    <property type="term" value="P:purine nucleoside catabolic process"/>
    <property type="evidence" value="ECO:0007669"/>
    <property type="project" value="TreeGrafter"/>
</dbReference>
<dbReference type="CDD" id="cd09006">
    <property type="entry name" value="PNP_EcPNPI-like"/>
    <property type="match status" value="1"/>
</dbReference>
<dbReference type="Gene3D" id="3.40.50.1580">
    <property type="entry name" value="Nucleoside phosphorylase domain"/>
    <property type="match status" value="1"/>
</dbReference>
<dbReference type="HAMAP" id="MF_01627">
    <property type="entry name" value="Pur_nucleosid_phosp"/>
    <property type="match status" value="1"/>
</dbReference>
<dbReference type="InterPro" id="IPR004402">
    <property type="entry name" value="DeoD-type"/>
</dbReference>
<dbReference type="InterPro" id="IPR018016">
    <property type="entry name" value="Nucleoside_phosphorylase_CS"/>
</dbReference>
<dbReference type="InterPro" id="IPR000845">
    <property type="entry name" value="Nucleoside_phosphorylase_d"/>
</dbReference>
<dbReference type="InterPro" id="IPR035994">
    <property type="entry name" value="Nucleoside_phosphorylase_sf"/>
</dbReference>
<dbReference type="NCBIfam" id="TIGR00107">
    <property type="entry name" value="deoD"/>
    <property type="match status" value="1"/>
</dbReference>
<dbReference type="NCBIfam" id="NF004489">
    <property type="entry name" value="PRK05819.1"/>
    <property type="match status" value="1"/>
</dbReference>
<dbReference type="NCBIfam" id="NF009914">
    <property type="entry name" value="PRK13374.1"/>
    <property type="match status" value="1"/>
</dbReference>
<dbReference type="PANTHER" id="PTHR43691:SF11">
    <property type="entry name" value="FI09636P-RELATED"/>
    <property type="match status" value="1"/>
</dbReference>
<dbReference type="PANTHER" id="PTHR43691">
    <property type="entry name" value="URIDINE PHOSPHORYLASE"/>
    <property type="match status" value="1"/>
</dbReference>
<dbReference type="Pfam" id="PF01048">
    <property type="entry name" value="PNP_UDP_1"/>
    <property type="match status" value="1"/>
</dbReference>
<dbReference type="SUPFAM" id="SSF53167">
    <property type="entry name" value="Purine and uridine phosphorylases"/>
    <property type="match status" value="1"/>
</dbReference>
<dbReference type="PROSITE" id="PS01232">
    <property type="entry name" value="PNP_UDP_1"/>
    <property type="match status" value="1"/>
</dbReference>
<comment type="function">
    <text evidence="2">Catalyzes the reversible phosphorolytic breakdown of the N-glycosidic bond in the beta-(deoxy)ribonucleoside molecules, with the formation of the corresponding free purine bases and pentose-1-phosphate.</text>
</comment>
<comment type="catalytic activity">
    <reaction evidence="2">
        <text>a purine D-ribonucleoside + phosphate = a purine nucleobase + alpha-D-ribose 1-phosphate</text>
        <dbReference type="Rhea" id="RHEA:19805"/>
        <dbReference type="ChEBI" id="CHEBI:26386"/>
        <dbReference type="ChEBI" id="CHEBI:43474"/>
        <dbReference type="ChEBI" id="CHEBI:57720"/>
        <dbReference type="ChEBI" id="CHEBI:142355"/>
        <dbReference type="EC" id="2.4.2.1"/>
    </reaction>
</comment>
<comment type="catalytic activity">
    <reaction evidence="2">
        <text>a purine 2'-deoxy-D-ribonucleoside + phosphate = a purine nucleobase + 2-deoxy-alpha-D-ribose 1-phosphate</text>
        <dbReference type="Rhea" id="RHEA:36431"/>
        <dbReference type="ChEBI" id="CHEBI:26386"/>
        <dbReference type="ChEBI" id="CHEBI:43474"/>
        <dbReference type="ChEBI" id="CHEBI:57259"/>
        <dbReference type="ChEBI" id="CHEBI:142361"/>
        <dbReference type="EC" id="2.4.2.1"/>
    </reaction>
</comment>
<comment type="subunit">
    <text evidence="2">Homohexamer; trimer of homodimers.</text>
</comment>
<comment type="similarity">
    <text evidence="2">Belongs to the PNP/UDP phosphorylase family.</text>
</comment>
<gene>
    <name evidence="2" type="primary">deoD</name>
    <name type="ordered locus">LMOf2365_1884</name>
</gene>
<reference key="1">
    <citation type="journal article" date="2004" name="Nucleic Acids Res.">
        <title>Whole genome comparisons of serotype 4b and 1/2a strains of the food-borne pathogen Listeria monocytogenes reveal new insights into the core genome components of this species.</title>
        <authorList>
            <person name="Nelson K.E."/>
            <person name="Fouts D.E."/>
            <person name="Mongodin E.F."/>
            <person name="Ravel J."/>
            <person name="DeBoy R.T."/>
            <person name="Kolonay J.F."/>
            <person name="Rasko D.A."/>
            <person name="Angiuoli S.V."/>
            <person name="Gill S.R."/>
            <person name="Paulsen I.T."/>
            <person name="Peterson J.D."/>
            <person name="White O."/>
            <person name="Nelson W.C."/>
            <person name="Nierman W.C."/>
            <person name="Beanan M.J."/>
            <person name="Brinkac L.M."/>
            <person name="Daugherty S.C."/>
            <person name="Dodson R.J."/>
            <person name="Durkin A.S."/>
            <person name="Madupu R."/>
            <person name="Haft D.H."/>
            <person name="Selengut J."/>
            <person name="Van Aken S.E."/>
            <person name="Khouri H.M."/>
            <person name="Fedorova N."/>
            <person name="Forberger H.A."/>
            <person name="Tran B."/>
            <person name="Kathariou S."/>
            <person name="Wonderling L.D."/>
            <person name="Uhlich G.A."/>
            <person name="Bayles D.O."/>
            <person name="Luchansky J.B."/>
            <person name="Fraser C.M."/>
        </authorList>
    </citation>
    <scope>NUCLEOTIDE SEQUENCE [LARGE SCALE GENOMIC DNA]</scope>
    <source>
        <strain>F2365</strain>
    </source>
</reference>
<evidence type="ECO:0000250" key="1">
    <source>
        <dbReference type="UniProtKB" id="P50389"/>
    </source>
</evidence>
<evidence type="ECO:0000255" key="2">
    <source>
        <dbReference type="HAMAP-Rule" id="MF_01627"/>
    </source>
</evidence>
<sequence length="233" mass="25357">MSVHIEAKQGEIAETILLPGDPLRAKYIAETFLEDVVLFNQVRGMLGFTGTYKGEKVSVMGTGMGIPSISIYVNELIQSYDVKNLIRVGTMGGIQADVKVRDVVIAQAASTDSQINRNTFAGVDFAPVADFSLLKKAYDAGIEKGLSLKVGNVFSADRFYNDQLDKQQLADYGVLGIEMEAAALYTLAQKYGRRALAILTVSDHIFTGEETSAEERQTTFNDMIVVALEAAIK</sequence>